<reference key="1">
    <citation type="journal article" date="1997" name="J. Bacteriol.">
        <title>Complete genome sequence of Methanobacterium thermoautotrophicum deltaH: functional analysis and comparative genomics.</title>
        <authorList>
            <person name="Smith D.R."/>
            <person name="Doucette-Stamm L.A."/>
            <person name="Deloughery C."/>
            <person name="Lee H.-M."/>
            <person name="Dubois J."/>
            <person name="Aldredge T."/>
            <person name="Bashirzadeh R."/>
            <person name="Blakely D."/>
            <person name="Cook R."/>
            <person name="Gilbert K."/>
            <person name="Harrison D."/>
            <person name="Hoang L."/>
            <person name="Keagle P."/>
            <person name="Lumm W."/>
            <person name="Pothier B."/>
            <person name="Qiu D."/>
            <person name="Spadafora R."/>
            <person name="Vicare R."/>
            <person name="Wang Y."/>
            <person name="Wierzbowski J."/>
            <person name="Gibson R."/>
            <person name="Jiwani N."/>
            <person name="Caruso A."/>
            <person name="Bush D."/>
            <person name="Safer H."/>
            <person name="Patwell D."/>
            <person name="Prabhakar S."/>
            <person name="McDougall S."/>
            <person name="Shimer G."/>
            <person name="Goyal A."/>
            <person name="Pietrovski S."/>
            <person name="Church G.M."/>
            <person name="Daniels C.J."/>
            <person name="Mao J.-I."/>
            <person name="Rice P."/>
            <person name="Noelling J."/>
            <person name="Reeve J.N."/>
        </authorList>
    </citation>
    <scope>NUCLEOTIDE SEQUENCE [LARGE SCALE GENOMIC DNA]</scope>
    <source>
        <strain>ATCC 29096 / DSM 1053 / JCM 10044 / NBRC 100330 / Delta H</strain>
    </source>
</reference>
<accession>O27001</accession>
<feature type="chain" id="PRO_0000144167" description="DNA-binding protein Tfx">
    <location>
        <begin position="1"/>
        <end position="138"/>
    </location>
</feature>
<feature type="helix" evidence="4">
    <location>
        <begin position="28"/>
        <end position="33"/>
    </location>
</feature>
<feature type="strand" evidence="4">
    <location>
        <begin position="36"/>
        <end position="38"/>
    </location>
</feature>
<feature type="helix" evidence="4">
    <location>
        <begin position="41"/>
        <end position="46"/>
    </location>
</feature>
<feature type="strand" evidence="4">
    <location>
        <begin position="50"/>
        <end position="53"/>
    </location>
</feature>
<feature type="helix" evidence="4">
    <location>
        <begin position="55"/>
        <end position="62"/>
    </location>
</feature>
<feature type="strand" evidence="4">
    <location>
        <begin position="66"/>
        <end position="70"/>
    </location>
</feature>
<feature type="helix" evidence="4">
    <location>
        <begin position="73"/>
        <end position="75"/>
    </location>
</feature>
<feature type="helix" evidence="4">
    <location>
        <begin position="76"/>
        <end position="90"/>
    </location>
</feature>
<feature type="helix" evidence="4">
    <location>
        <begin position="98"/>
        <end position="108"/>
    </location>
</feature>
<feature type="strand" evidence="4">
    <location>
        <begin position="110"/>
        <end position="112"/>
    </location>
</feature>
<feature type="strand" evidence="4">
    <location>
        <begin position="118"/>
        <end position="120"/>
    </location>
</feature>
<feature type="strand" evidence="4">
    <location>
        <begin position="122"/>
        <end position="135"/>
    </location>
</feature>
<comment type="function">
    <text evidence="1">Transcriptional activator of the fmdECB operon.</text>
</comment>
<comment type="similarity">
    <text evidence="2">Belongs to the Tfx family.</text>
</comment>
<comment type="sequence caution" evidence="3">
    <conflict type="erroneous initiation">
        <sequence resource="EMBL-CDS" id="AAB85414"/>
    </conflict>
</comment>
<protein>
    <recommendedName>
        <fullName>DNA-binding protein Tfx</fullName>
    </recommendedName>
</protein>
<organism>
    <name type="scientific">Methanothermobacter thermautotrophicus (strain ATCC 29096 / DSM 1053 / JCM 10044 / NBRC 100330 / Delta H)</name>
    <name type="common">Methanobacterium thermoautotrophicum</name>
    <dbReference type="NCBI Taxonomy" id="187420"/>
    <lineage>
        <taxon>Archaea</taxon>
        <taxon>Methanobacteriati</taxon>
        <taxon>Methanobacteriota</taxon>
        <taxon>Methanomada group</taxon>
        <taxon>Methanobacteria</taxon>
        <taxon>Methanobacteriales</taxon>
        <taxon>Methanobacteriaceae</taxon>
        <taxon>Methanothermobacter</taxon>
    </lineage>
</organism>
<evidence type="ECO:0000250" key="1"/>
<evidence type="ECO:0000255" key="2">
    <source>
        <dbReference type="HAMAP-Rule" id="MF_00620"/>
    </source>
</evidence>
<evidence type="ECO:0000305" key="3"/>
<evidence type="ECO:0007829" key="4">
    <source>
        <dbReference type="PDB" id="1NR3"/>
    </source>
</evidence>
<proteinExistence type="evidence at protein level"/>
<name>TFX_METTH</name>
<gene>
    <name type="primary">tfx</name>
    <name type="ordered locus">MTH_916</name>
</gene>
<sequence>MSKKTFLTERQKTVLEMRERGWSQKKIARELKTTRQNVSAIERKAMENIEKSRNTLDFVKSLKSPVRILCRRGDTLDEIIKRLLEESNKEGIHVIHDSITLAFLIREKASHRIVHRVVKSDFEIGVTRDGEIIVDLNS</sequence>
<dbReference type="EMBL" id="AE000666">
    <property type="protein sequence ID" value="AAB85414.1"/>
    <property type="status" value="ALT_INIT"/>
    <property type="molecule type" value="Genomic_DNA"/>
</dbReference>
<dbReference type="PIR" id="F69222">
    <property type="entry name" value="F69222"/>
</dbReference>
<dbReference type="PDB" id="1NR3">
    <property type="method" value="NMR"/>
    <property type="chains" value="A=17-138"/>
</dbReference>
<dbReference type="PDBsum" id="1NR3"/>
<dbReference type="BMRB" id="O27001"/>
<dbReference type="SMR" id="O27001"/>
<dbReference type="STRING" id="187420.MTH_916"/>
<dbReference type="PaxDb" id="187420-MTH_916"/>
<dbReference type="DNASU" id="1471324"/>
<dbReference type="EnsemblBacteria" id="AAB85414">
    <property type="protein sequence ID" value="AAB85414"/>
    <property type="gene ID" value="MTH_916"/>
</dbReference>
<dbReference type="KEGG" id="mth:MTH_916"/>
<dbReference type="HOGENOM" id="CLU_125807_0_1_2"/>
<dbReference type="InParanoid" id="O27001"/>
<dbReference type="EvolutionaryTrace" id="O27001"/>
<dbReference type="Proteomes" id="UP000005223">
    <property type="component" value="Chromosome"/>
</dbReference>
<dbReference type="GO" id="GO:0003677">
    <property type="term" value="F:DNA binding"/>
    <property type="evidence" value="ECO:0007669"/>
    <property type="project" value="UniProtKB-KW"/>
</dbReference>
<dbReference type="GO" id="GO:0003700">
    <property type="term" value="F:DNA-binding transcription factor activity"/>
    <property type="evidence" value="ECO:0007669"/>
    <property type="project" value="UniProtKB-UniRule"/>
</dbReference>
<dbReference type="GO" id="GO:0006352">
    <property type="term" value="P:DNA-templated transcription initiation"/>
    <property type="evidence" value="ECO:0007669"/>
    <property type="project" value="InterPro"/>
</dbReference>
<dbReference type="Gene3D" id="3.30.1190.10">
    <property type="entry name" value="DNA-binding protein Tfx superfamily, archaea"/>
    <property type="match status" value="1"/>
</dbReference>
<dbReference type="HAMAP" id="MF_00620">
    <property type="entry name" value="HTH_type_Tfx"/>
    <property type="match status" value="1"/>
</dbReference>
<dbReference type="InterPro" id="IPR007630">
    <property type="entry name" value="RNA_pol_sigma70_r4"/>
</dbReference>
<dbReference type="InterPro" id="IPR029291">
    <property type="entry name" value="Tfx_C"/>
</dbReference>
<dbReference type="InterPro" id="IPR004645">
    <property type="entry name" value="Tfx_DNA-bd_arc"/>
</dbReference>
<dbReference type="InterPro" id="IPR018384">
    <property type="entry name" value="Tfx_DNA-bd_euryarc"/>
</dbReference>
<dbReference type="InterPro" id="IPR036657">
    <property type="entry name" value="Tfx_DNA-bd_sf_arc"/>
</dbReference>
<dbReference type="NCBIfam" id="TIGR00721">
    <property type="entry name" value="tfx"/>
    <property type="match status" value="1"/>
</dbReference>
<dbReference type="Pfam" id="PF04545">
    <property type="entry name" value="Sigma70_r4"/>
    <property type="match status" value="1"/>
</dbReference>
<dbReference type="Pfam" id="PF14601">
    <property type="entry name" value="TFX_C"/>
    <property type="match status" value="1"/>
</dbReference>
<dbReference type="PIRSF" id="PIRSF004932">
    <property type="entry name" value="DNA_bind_Tfx"/>
    <property type="match status" value="1"/>
</dbReference>
<dbReference type="SUPFAM" id="SSF89915">
    <property type="entry name" value="DNA-binding protein Tfx"/>
    <property type="match status" value="1"/>
</dbReference>
<keyword id="KW-0002">3D-structure</keyword>
<keyword id="KW-0010">Activator</keyword>
<keyword id="KW-0238">DNA-binding</keyword>
<keyword id="KW-1185">Reference proteome</keyword>
<keyword id="KW-0804">Transcription</keyword>
<keyword id="KW-0805">Transcription regulation</keyword>